<name>GLPK_CLAM3</name>
<gene>
    <name evidence="1" type="primary">glpK</name>
    <name type="ordered locus">CMM_1831</name>
</gene>
<accession>A5CS23</accession>
<organism>
    <name type="scientific">Clavibacter michiganensis subsp. michiganensis (strain NCPPB 382)</name>
    <dbReference type="NCBI Taxonomy" id="443906"/>
    <lineage>
        <taxon>Bacteria</taxon>
        <taxon>Bacillati</taxon>
        <taxon>Actinomycetota</taxon>
        <taxon>Actinomycetes</taxon>
        <taxon>Micrococcales</taxon>
        <taxon>Microbacteriaceae</taxon>
        <taxon>Clavibacter</taxon>
    </lineage>
</organism>
<feature type="chain" id="PRO_1000124187" description="Glycerol kinase">
    <location>
        <begin position="1"/>
        <end position="505"/>
    </location>
</feature>
<feature type="binding site" evidence="1">
    <location>
        <position position="13"/>
    </location>
    <ligand>
        <name>ADP</name>
        <dbReference type="ChEBI" id="CHEBI:456216"/>
    </ligand>
</feature>
<feature type="binding site" evidence="1">
    <location>
        <position position="13"/>
    </location>
    <ligand>
        <name>ATP</name>
        <dbReference type="ChEBI" id="CHEBI:30616"/>
    </ligand>
</feature>
<feature type="binding site" evidence="1">
    <location>
        <position position="13"/>
    </location>
    <ligand>
        <name>sn-glycerol 3-phosphate</name>
        <dbReference type="ChEBI" id="CHEBI:57597"/>
    </ligand>
</feature>
<feature type="binding site" evidence="1">
    <location>
        <position position="14"/>
    </location>
    <ligand>
        <name>ATP</name>
        <dbReference type="ChEBI" id="CHEBI:30616"/>
    </ligand>
</feature>
<feature type="binding site" evidence="1">
    <location>
        <position position="15"/>
    </location>
    <ligand>
        <name>ATP</name>
        <dbReference type="ChEBI" id="CHEBI:30616"/>
    </ligand>
</feature>
<feature type="binding site" evidence="1">
    <location>
        <position position="17"/>
    </location>
    <ligand>
        <name>ADP</name>
        <dbReference type="ChEBI" id="CHEBI:456216"/>
    </ligand>
</feature>
<feature type="binding site" evidence="1">
    <location>
        <position position="83"/>
    </location>
    <ligand>
        <name>glycerol</name>
        <dbReference type="ChEBI" id="CHEBI:17754"/>
    </ligand>
</feature>
<feature type="binding site" evidence="1">
    <location>
        <position position="83"/>
    </location>
    <ligand>
        <name>sn-glycerol 3-phosphate</name>
        <dbReference type="ChEBI" id="CHEBI:57597"/>
    </ligand>
</feature>
<feature type="binding site" evidence="1">
    <location>
        <position position="84"/>
    </location>
    <ligand>
        <name>glycerol</name>
        <dbReference type="ChEBI" id="CHEBI:17754"/>
    </ligand>
</feature>
<feature type="binding site" evidence="1">
    <location>
        <position position="84"/>
    </location>
    <ligand>
        <name>sn-glycerol 3-phosphate</name>
        <dbReference type="ChEBI" id="CHEBI:57597"/>
    </ligand>
</feature>
<feature type="binding site" evidence="1">
    <location>
        <position position="135"/>
    </location>
    <ligand>
        <name>glycerol</name>
        <dbReference type="ChEBI" id="CHEBI:17754"/>
    </ligand>
</feature>
<feature type="binding site" evidence="1">
    <location>
        <position position="135"/>
    </location>
    <ligand>
        <name>sn-glycerol 3-phosphate</name>
        <dbReference type="ChEBI" id="CHEBI:57597"/>
    </ligand>
</feature>
<feature type="binding site" evidence="1">
    <location>
        <position position="247"/>
    </location>
    <ligand>
        <name>glycerol</name>
        <dbReference type="ChEBI" id="CHEBI:17754"/>
    </ligand>
</feature>
<feature type="binding site" evidence="1">
    <location>
        <position position="247"/>
    </location>
    <ligand>
        <name>sn-glycerol 3-phosphate</name>
        <dbReference type="ChEBI" id="CHEBI:57597"/>
    </ligand>
</feature>
<feature type="binding site" evidence="1">
    <location>
        <position position="248"/>
    </location>
    <ligand>
        <name>glycerol</name>
        <dbReference type="ChEBI" id="CHEBI:17754"/>
    </ligand>
</feature>
<feature type="binding site" evidence="1">
    <location>
        <position position="269"/>
    </location>
    <ligand>
        <name>ADP</name>
        <dbReference type="ChEBI" id="CHEBI:456216"/>
    </ligand>
</feature>
<feature type="binding site" evidence="1">
    <location>
        <position position="269"/>
    </location>
    <ligand>
        <name>ATP</name>
        <dbReference type="ChEBI" id="CHEBI:30616"/>
    </ligand>
</feature>
<feature type="binding site" evidence="1">
    <location>
        <position position="313"/>
    </location>
    <ligand>
        <name>ADP</name>
        <dbReference type="ChEBI" id="CHEBI:456216"/>
    </ligand>
</feature>
<feature type="binding site" evidence="1">
    <location>
        <position position="313"/>
    </location>
    <ligand>
        <name>ATP</name>
        <dbReference type="ChEBI" id="CHEBI:30616"/>
    </ligand>
</feature>
<feature type="binding site" evidence="1">
    <location>
        <position position="317"/>
    </location>
    <ligand>
        <name>ATP</name>
        <dbReference type="ChEBI" id="CHEBI:30616"/>
    </ligand>
</feature>
<feature type="binding site" evidence="1">
    <location>
        <position position="414"/>
    </location>
    <ligand>
        <name>ADP</name>
        <dbReference type="ChEBI" id="CHEBI:456216"/>
    </ligand>
</feature>
<feature type="binding site" evidence="1">
    <location>
        <position position="414"/>
    </location>
    <ligand>
        <name>ATP</name>
        <dbReference type="ChEBI" id="CHEBI:30616"/>
    </ligand>
</feature>
<feature type="binding site" evidence="1">
    <location>
        <position position="418"/>
    </location>
    <ligand>
        <name>ADP</name>
        <dbReference type="ChEBI" id="CHEBI:456216"/>
    </ligand>
</feature>
<evidence type="ECO:0000255" key="1">
    <source>
        <dbReference type="HAMAP-Rule" id="MF_00186"/>
    </source>
</evidence>
<dbReference type="EC" id="2.7.1.30" evidence="1"/>
<dbReference type="EMBL" id="AM711867">
    <property type="protein sequence ID" value="CAN01886.1"/>
    <property type="molecule type" value="Genomic_DNA"/>
</dbReference>
<dbReference type="RefSeq" id="WP_012038518.1">
    <property type="nucleotide sequence ID" value="NC_009480.1"/>
</dbReference>
<dbReference type="SMR" id="A5CS23"/>
<dbReference type="KEGG" id="cmi:CMM_1831"/>
<dbReference type="eggNOG" id="COG0554">
    <property type="taxonomic scope" value="Bacteria"/>
</dbReference>
<dbReference type="HOGENOM" id="CLU_009281_2_3_11"/>
<dbReference type="OrthoDB" id="9805576at2"/>
<dbReference type="UniPathway" id="UPA00618">
    <property type="reaction ID" value="UER00672"/>
</dbReference>
<dbReference type="Proteomes" id="UP000001564">
    <property type="component" value="Chromosome"/>
</dbReference>
<dbReference type="GO" id="GO:0005829">
    <property type="term" value="C:cytosol"/>
    <property type="evidence" value="ECO:0007669"/>
    <property type="project" value="TreeGrafter"/>
</dbReference>
<dbReference type="GO" id="GO:0005524">
    <property type="term" value="F:ATP binding"/>
    <property type="evidence" value="ECO:0007669"/>
    <property type="project" value="UniProtKB-UniRule"/>
</dbReference>
<dbReference type="GO" id="GO:0004370">
    <property type="term" value="F:glycerol kinase activity"/>
    <property type="evidence" value="ECO:0000250"/>
    <property type="project" value="UniProtKB"/>
</dbReference>
<dbReference type="GO" id="GO:0019563">
    <property type="term" value="P:glycerol catabolic process"/>
    <property type="evidence" value="ECO:0007669"/>
    <property type="project" value="UniProtKB-UniRule"/>
</dbReference>
<dbReference type="GO" id="GO:0006071">
    <property type="term" value="P:glycerol metabolic process"/>
    <property type="evidence" value="ECO:0000250"/>
    <property type="project" value="UniProtKB"/>
</dbReference>
<dbReference type="GO" id="GO:0006072">
    <property type="term" value="P:glycerol-3-phosphate metabolic process"/>
    <property type="evidence" value="ECO:0007669"/>
    <property type="project" value="InterPro"/>
</dbReference>
<dbReference type="CDD" id="cd07769">
    <property type="entry name" value="ASKHA_NBD_FGGY_GK"/>
    <property type="match status" value="1"/>
</dbReference>
<dbReference type="FunFam" id="3.30.420.40:FF:000007">
    <property type="entry name" value="Glycerol kinase"/>
    <property type="match status" value="1"/>
</dbReference>
<dbReference type="FunFam" id="3.30.420.40:FF:000008">
    <property type="entry name" value="Glycerol kinase"/>
    <property type="match status" value="1"/>
</dbReference>
<dbReference type="Gene3D" id="3.30.420.40">
    <property type="match status" value="2"/>
</dbReference>
<dbReference type="HAMAP" id="MF_00186">
    <property type="entry name" value="Glycerol_kin"/>
    <property type="match status" value="1"/>
</dbReference>
<dbReference type="InterPro" id="IPR043129">
    <property type="entry name" value="ATPase_NBD"/>
</dbReference>
<dbReference type="InterPro" id="IPR000577">
    <property type="entry name" value="Carb_kinase_FGGY"/>
</dbReference>
<dbReference type="InterPro" id="IPR018483">
    <property type="entry name" value="Carb_kinase_FGGY_CS"/>
</dbReference>
<dbReference type="InterPro" id="IPR018485">
    <property type="entry name" value="FGGY_C"/>
</dbReference>
<dbReference type="InterPro" id="IPR018484">
    <property type="entry name" value="FGGY_N"/>
</dbReference>
<dbReference type="InterPro" id="IPR005999">
    <property type="entry name" value="Glycerol_kin"/>
</dbReference>
<dbReference type="NCBIfam" id="TIGR01311">
    <property type="entry name" value="glycerol_kin"/>
    <property type="match status" value="1"/>
</dbReference>
<dbReference type="NCBIfam" id="NF000756">
    <property type="entry name" value="PRK00047.1"/>
    <property type="match status" value="1"/>
</dbReference>
<dbReference type="PANTHER" id="PTHR10196:SF69">
    <property type="entry name" value="GLYCEROL KINASE"/>
    <property type="match status" value="1"/>
</dbReference>
<dbReference type="PANTHER" id="PTHR10196">
    <property type="entry name" value="SUGAR KINASE"/>
    <property type="match status" value="1"/>
</dbReference>
<dbReference type="Pfam" id="PF02782">
    <property type="entry name" value="FGGY_C"/>
    <property type="match status" value="1"/>
</dbReference>
<dbReference type="Pfam" id="PF00370">
    <property type="entry name" value="FGGY_N"/>
    <property type="match status" value="1"/>
</dbReference>
<dbReference type="PIRSF" id="PIRSF000538">
    <property type="entry name" value="GlpK"/>
    <property type="match status" value="1"/>
</dbReference>
<dbReference type="SUPFAM" id="SSF53067">
    <property type="entry name" value="Actin-like ATPase domain"/>
    <property type="match status" value="2"/>
</dbReference>
<dbReference type="PROSITE" id="PS00933">
    <property type="entry name" value="FGGY_KINASES_1"/>
    <property type="match status" value="1"/>
</dbReference>
<dbReference type="PROSITE" id="PS00445">
    <property type="entry name" value="FGGY_KINASES_2"/>
    <property type="match status" value="1"/>
</dbReference>
<comment type="function">
    <text evidence="1">Key enzyme in the regulation of glycerol uptake and metabolism. Catalyzes the phosphorylation of glycerol to yield sn-glycerol 3-phosphate.</text>
</comment>
<comment type="catalytic activity">
    <reaction evidence="1">
        <text>glycerol + ATP = sn-glycerol 3-phosphate + ADP + H(+)</text>
        <dbReference type="Rhea" id="RHEA:21644"/>
        <dbReference type="ChEBI" id="CHEBI:15378"/>
        <dbReference type="ChEBI" id="CHEBI:17754"/>
        <dbReference type="ChEBI" id="CHEBI:30616"/>
        <dbReference type="ChEBI" id="CHEBI:57597"/>
        <dbReference type="ChEBI" id="CHEBI:456216"/>
        <dbReference type="EC" id="2.7.1.30"/>
    </reaction>
</comment>
<comment type="activity regulation">
    <text evidence="1">Inhibited by fructose 1,6-bisphosphate (FBP).</text>
</comment>
<comment type="pathway">
    <text evidence="1">Polyol metabolism; glycerol degradation via glycerol kinase pathway; sn-glycerol 3-phosphate from glycerol: step 1/1.</text>
</comment>
<comment type="similarity">
    <text evidence="1">Belongs to the FGGY kinase family.</text>
</comment>
<reference key="1">
    <citation type="journal article" date="2008" name="J. Bacteriol.">
        <title>The genome sequence of the tomato-pathogenic actinomycete Clavibacter michiganensis subsp. michiganensis NCPPB382 reveals a large island involved in pathogenicity.</title>
        <authorList>
            <person name="Gartemann K.-H."/>
            <person name="Abt B."/>
            <person name="Bekel T."/>
            <person name="Burger A."/>
            <person name="Engemann J."/>
            <person name="Fluegel M."/>
            <person name="Gaigalat L."/>
            <person name="Goesmann A."/>
            <person name="Graefen I."/>
            <person name="Kalinowski J."/>
            <person name="Kaup O."/>
            <person name="Kirchner O."/>
            <person name="Krause L."/>
            <person name="Linke B."/>
            <person name="McHardy A."/>
            <person name="Meyer F."/>
            <person name="Pohle S."/>
            <person name="Rueckert C."/>
            <person name="Schneiker S."/>
            <person name="Zellermann E.-M."/>
            <person name="Puehler A."/>
            <person name="Eichenlaub R."/>
            <person name="Kaiser O."/>
            <person name="Bartels D."/>
        </authorList>
    </citation>
    <scope>NUCLEOTIDE SEQUENCE [LARGE SCALE GENOMIC DNA]</scope>
    <source>
        <strain>NCPPB 382</strain>
    </source>
</reference>
<keyword id="KW-0067">ATP-binding</keyword>
<keyword id="KW-0319">Glycerol metabolism</keyword>
<keyword id="KW-0418">Kinase</keyword>
<keyword id="KW-0547">Nucleotide-binding</keyword>
<keyword id="KW-0808">Transferase</keyword>
<proteinExistence type="inferred from homology"/>
<protein>
    <recommendedName>
        <fullName evidence="1">Glycerol kinase</fullName>
        <ecNumber evidence="1">2.7.1.30</ecNumber>
    </recommendedName>
    <alternativeName>
        <fullName evidence="1">ATP:glycerol 3-phosphotransferase</fullName>
    </alternativeName>
    <alternativeName>
        <fullName evidence="1">Glycerokinase</fullName>
        <shortName evidence="1">GK</shortName>
    </alternativeName>
</protein>
<sequence length="505" mass="55485">MSEKYIVAIDQGTTSTRAIVFDHSGSIVSTGQLEHEQIFPRAGWVEHDPMEIWRNTREVIGQALSKADITRHDVEAVGITNQRETAVVWDRTTGKPVYNAIVWQDTRTQKIVDRLAADGGVERFKPTVGLPLATYFSGTKIVWILENVDGAREKAEAGELMFGTTDTWVLWNLTGGTDGGVHVTDVTNASRTLFMDLETLQWDDEILKAFDVPRSMLPEIKSSSEVYGQVESSSLLREVPIAGILGDQQAATFGQAAFDQGESKNTYGTGNFLIFNTGTDIIHSQNGLLTTLGYKLGDQEPHYALEGSIAVTGSLVQWMRDNLGLVSSAAEIETLAATVEDNGGVYFVPAFSGLFAPYWRSDARGALVGLTRYVNKGHIARAALEATAFQTREVLDAVNADSGVDLTELKVDGGMIANNLLMQFQADILGVPVVRPVVAETTALGAAYAAGLAVGFWKDLDDLRQNWQEDSRWTPDMDDAERERQLRLWKKAVTKTFDWVDDDVQ</sequence>